<comment type="function">
    <text evidence="1">Major role in the synthesis of nucleoside triphosphates other than ATP. The ATP gamma phosphate is transferred to the NDP beta phosphate via a ping-pong mechanism, using a phosphorylated active-site intermediate.</text>
</comment>
<comment type="catalytic activity">
    <reaction evidence="1">
        <text>a 2'-deoxyribonucleoside 5'-diphosphate + ATP = a 2'-deoxyribonucleoside 5'-triphosphate + ADP</text>
        <dbReference type="Rhea" id="RHEA:44640"/>
        <dbReference type="ChEBI" id="CHEBI:30616"/>
        <dbReference type="ChEBI" id="CHEBI:61560"/>
        <dbReference type="ChEBI" id="CHEBI:73316"/>
        <dbReference type="ChEBI" id="CHEBI:456216"/>
        <dbReference type="EC" id="2.7.4.6"/>
    </reaction>
</comment>
<comment type="catalytic activity">
    <reaction evidence="1">
        <text>a ribonucleoside 5'-diphosphate + ATP = a ribonucleoside 5'-triphosphate + ADP</text>
        <dbReference type="Rhea" id="RHEA:18113"/>
        <dbReference type="ChEBI" id="CHEBI:30616"/>
        <dbReference type="ChEBI" id="CHEBI:57930"/>
        <dbReference type="ChEBI" id="CHEBI:61557"/>
        <dbReference type="ChEBI" id="CHEBI:456216"/>
        <dbReference type="EC" id="2.7.4.6"/>
    </reaction>
</comment>
<comment type="cofactor">
    <cofactor evidence="1">
        <name>Mg(2+)</name>
        <dbReference type="ChEBI" id="CHEBI:18420"/>
    </cofactor>
</comment>
<comment type="subunit">
    <text evidence="1">Homotetramer.</text>
</comment>
<comment type="subcellular location">
    <subcellularLocation>
        <location evidence="1">Cytoplasm</location>
    </subcellularLocation>
</comment>
<comment type="similarity">
    <text evidence="1">Belongs to the NDK family.</text>
</comment>
<sequence length="140" mass="15690">MTIQYTFSMIKPDAIKRNKIGQVNTYLENAGLKIVAQKMKFLTKYEAACFYDEHRARPFFNSLVEYITSGAVVLQVLKGEDAITLNRTVMGATNPAEAEAGTIRKDLGESIEANSIHGSDSENSAKREIEFFFNKSEIIE</sequence>
<organism>
    <name type="scientific">Rickettsia rickettsii (strain Sheila Smith)</name>
    <dbReference type="NCBI Taxonomy" id="392021"/>
    <lineage>
        <taxon>Bacteria</taxon>
        <taxon>Pseudomonadati</taxon>
        <taxon>Pseudomonadota</taxon>
        <taxon>Alphaproteobacteria</taxon>
        <taxon>Rickettsiales</taxon>
        <taxon>Rickettsiaceae</taxon>
        <taxon>Rickettsieae</taxon>
        <taxon>Rickettsia</taxon>
        <taxon>spotted fever group</taxon>
    </lineage>
</organism>
<feature type="chain" id="PRO_1000026288" description="Nucleoside diphosphate kinase">
    <location>
        <begin position="1"/>
        <end position="140"/>
    </location>
</feature>
<feature type="active site" description="Pros-phosphohistidine intermediate" evidence="1">
    <location>
        <position position="117"/>
    </location>
</feature>
<feature type="binding site" evidence="1">
    <location>
        <position position="11"/>
    </location>
    <ligand>
        <name>ATP</name>
        <dbReference type="ChEBI" id="CHEBI:30616"/>
    </ligand>
</feature>
<feature type="binding site" evidence="1">
    <location>
        <position position="59"/>
    </location>
    <ligand>
        <name>ATP</name>
        <dbReference type="ChEBI" id="CHEBI:30616"/>
    </ligand>
</feature>
<feature type="binding site" evidence="1">
    <location>
        <position position="87"/>
    </location>
    <ligand>
        <name>ATP</name>
        <dbReference type="ChEBI" id="CHEBI:30616"/>
    </ligand>
</feature>
<feature type="binding site" evidence="1">
    <location>
        <position position="93"/>
    </location>
    <ligand>
        <name>ATP</name>
        <dbReference type="ChEBI" id="CHEBI:30616"/>
    </ligand>
</feature>
<feature type="binding site" evidence="1">
    <location>
        <position position="104"/>
    </location>
    <ligand>
        <name>ATP</name>
        <dbReference type="ChEBI" id="CHEBI:30616"/>
    </ligand>
</feature>
<feature type="binding site" evidence="1">
    <location>
        <position position="114"/>
    </location>
    <ligand>
        <name>ATP</name>
        <dbReference type="ChEBI" id="CHEBI:30616"/>
    </ligand>
</feature>
<name>NDK_RICRS</name>
<reference key="1">
    <citation type="submission" date="2007-09" db="EMBL/GenBank/DDBJ databases">
        <title>Complete genome sequence of Rickettsia rickettsii.</title>
        <authorList>
            <person name="Madan A."/>
            <person name="Fahey J."/>
            <person name="Helton E."/>
            <person name="Ketteman M."/>
            <person name="Madan A."/>
            <person name="Rodrigues S."/>
            <person name="Sanchez A."/>
            <person name="Dasch G."/>
            <person name="Eremeeva M."/>
        </authorList>
    </citation>
    <scope>NUCLEOTIDE SEQUENCE [LARGE SCALE GENOMIC DNA]</scope>
    <source>
        <strain>Sheila Smith</strain>
    </source>
</reference>
<keyword id="KW-0067">ATP-binding</keyword>
<keyword id="KW-0963">Cytoplasm</keyword>
<keyword id="KW-0418">Kinase</keyword>
<keyword id="KW-0460">Magnesium</keyword>
<keyword id="KW-0479">Metal-binding</keyword>
<keyword id="KW-0546">Nucleotide metabolism</keyword>
<keyword id="KW-0547">Nucleotide-binding</keyword>
<keyword id="KW-0597">Phosphoprotein</keyword>
<keyword id="KW-0808">Transferase</keyword>
<accession>A8GQL6</accession>
<gene>
    <name evidence="1" type="primary">ndk</name>
    <name type="ordered locus">A1G_00525</name>
</gene>
<proteinExistence type="inferred from homology"/>
<evidence type="ECO:0000255" key="1">
    <source>
        <dbReference type="HAMAP-Rule" id="MF_00451"/>
    </source>
</evidence>
<protein>
    <recommendedName>
        <fullName evidence="1">Nucleoside diphosphate kinase</fullName>
        <shortName evidence="1">NDK</shortName>
        <shortName evidence="1">NDP kinase</shortName>
        <ecNumber evidence="1">2.7.4.6</ecNumber>
    </recommendedName>
    <alternativeName>
        <fullName evidence="1">Nucleoside-2-P kinase</fullName>
    </alternativeName>
</protein>
<dbReference type="EC" id="2.7.4.6" evidence="1"/>
<dbReference type="EMBL" id="CP000848">
    <property type="protein sequence ID" value="ABV75691.1"/>
    <property type="molecule type" value="Genomic_DNA"/>
</dbReference>
<dbReference type="RefSeq" id="WP_010976767.1">
    <property type="nucleotide sequence ID" value="NC_009882.1"/>
</dbReference>
<dbReference type="SMR" id="A8GQL6"/>
<dbReference type="GeneID" id="79936884"/>
<dbReference type="GeneID" id="95361814"/>
<dbReference type="KEGG" id="rri:A1G_00525"/>
<dbReference type="HOGENOM" id="CLU_060216_8_1_5"/>
<dbReference type="Proteomes" id="UP000006832">
    <property type="component" value="Chromosome"/>
</dbReference>
<dbReference type="GO" id="GO:0005737">
    <property type="term" value="C:cytoplasm"/>
    <property type="evidence" value="ECO:0007669"/>
    <property type="project" value="UniProtKB-SubCell"/>
</dbReference>
<dbReference type="GO" id="GO:0005524">
    <property type="term" value="F:ATP binding"/>
    <property type="evidence" value="ECO:0007669"/>
    <property type="project" value="UniProtKB-UniRule"/>
</dbReference>
<dbReference type="GO" id="GO:0046872">
    <property type="term" value="F:metal ion binding"/>
    <property type="evidence" value="ECO:0007669"/>
    <property type="project" value="UniProtKB-KW"/>
</dbReference>
<dbReference type="GO" id="GO:0004550">
    <property type="term" value="F:nucleoside diphosphate kinase activity"/>
    <property type="evidence" value="ECO:0007669"/>
    <property type="project" value="UniProtKB-UniRule"/>
</dbReference>
<dbReference type="GO" id="GO:0006241">
    <property type="term" value="P:CTP biosynthetic process"/>
    <property type="evidence" value="ECO:0007669"/>
    <property type="project" value="UniProtKB-UniRule"/>
</dbReference>
<dbReference type="GO" id="GO:0006183">
    <property type="term" value="P:GTP biosynthetic process"/>
    <property type="evidence" value="ECO:0007669"/>
    <property type="project" value="UniProtKB-UniRule"/>
</dbReference>
<dbReference type="GO" id="GO:0006228">
    <property type="term" value="P:UTP biosynthetic process"/>
    <property type="evidence" value="ECO:0007669"/>
    <property type="project" value="UniProtKB-UniRule"/>
</dbReference>
<dbReference type="CDD" id="cd04413">
    <property type="entry name" value="NDPk_I"/>
    <property type="match status" value="1"/>
</dbReference>
<dbReference type="FunFam" id="3.30.70.141:FF:000003">
    <property type="entry name" value="Nucleoside diphosphate kinase"/>
    <property type="match status" value="1"/>
</dbReference>
<dbReference type="Gene3D" id="3.30.70.141">
    <property type="entry name" value="Nucleoside diphosphate kinase-like domain"/>
    <property type="match status" value="1"/>
</dbReference>
<dbReference type="HAMAP" id="MF_00451">
    <property type="entry name" value="NDP_kinase"/>
    <property type="match status" value="1"/>
</dbReference>
<dbReference type="InterPro" id="IPR034907">
    <property type="entry name" value="NDK-like_dom"/>
</dbReference>
<dbReference type="InterPro" id="IPR036850">
    <property type="entry name" value="NDK-like_dom_sf"/>
</dbReference>
<dbReference type="InterPro" id="IPR001564">
    <property type="entry name" value="Nucleoside_diP_kinase"/>
</dbReference>
<dbReference type="InterPro" id="IPR023005">
    <property type="entry name" value="Nucleoside_diP_kinase_AS"/>
</dbReference>
<dbReference type="NCBIfam" id="NF001908">
    <property type="entry name" value="PRK00668.1"/>
    <property type="match status" value="1"/>
</dbReference>
<dbReference type="PANTHER" id="PTHR46161">
    <property type="entry name" value="NUCLEOSIDE DIPHOSPHATE KINASE"/>
    <property type="match status" value="1"/>
</dbReference>
<dbReference type="PANTHER" id="PTHR46161:SF3">
    <property type="entry name" value="NUCLEOSIDE DIPHOSPHATE KINASE DDB_G0292928-RELATED"/>
    <property type="match status" value="1"/>
</dbReference>
<dbReference type="Pfam" id="PF00334">
    <property type="entry name" value="NDK"/>
    <property type="match status" value="1"/>
</dbReference>
<dbReference type="PRINTS" id="PR01243">
    <property type="entry name" value="NUCDPKINASE"/>
</dbReference>
<dbReference type="SMART" id="SM00562">
    <property type="entry name" value="NDK"/>
    <property type="match status" value="1"/>
</dbReference>
<dbReference type="SUPFAM" id="SSF54919">
    <property type="entry name" value="Nucleoside diphosphate kinase, NDK"/>
    <property type="match status" value="1"/>
</dbReference>
<dbReference type="PROSITE" id="PS00469">
    <property type="entry name" value="NDPK"/>
    <property type="match status" value="1"/>
</dbReference>
<dbReference type="PROSITE" id="PS51374">
    <property type="entry name" value="NDPK_LIKE"/>
    <property type="match status" value="1"/>
</dbReference>